<accession>P74557</accession>
<evidence type="ECO:0000255" key="1"/>
<evidence type="ECO:0000255" key="2">
    <source>
        <dbReference type="PROSITE-ProRule" id="PRU01266"/>
    </source>
</evidence>
<evidence type="ECO:0000256" key="3">
    <source>
        <dbReference type="SAM" id="MobiDB-lite"/>
    </source>
</evidence>
<evidence type="ECO:0000305" key="4"/>
<proteinExistence type="inferred from homology"/>
<protein>
    <recommendedName>
        <fullName>UPF0026 protein slr1464</fullName>
    </recommendedName>
</protein>
<organism>
    <name type="scientific">Synechocystis sp. (strain ATCC 27184 / PCC 6803 / Kazusa)</name>
    <dbReference type="NCBI Taxonomy" id="1111708"/>
    <lineage>
        <taxon>Bacteria</taxon>
        <taxon>Bacillati</taxon>
        <taxon>Cyanobacteriota</taxon>
        <taxon>Cyanophyceae</taxon>
        <taxon>Synechococcales</taxon>
        <taxon>Merismopediaceae</taxon>
        <taxon>Synechocystis</taxon>
    </lineage>
</organism>
<name>Y1464_SYNY3</name>
<comment type="cofactor">
    <cofactor evidence="4">
        <name>[4Fe-4S] cluster</name>
        <dbReference type="ChEBI" id="CHEBI:49883"/>
    </cofactor>
    <text evidence="4">Binds 1 [4Fe-4S] cluster. The cluster is coordinated with 3 cysteines and an exchangeable S-adenosyl-L-methionine.</text>
</comment>
<comment type="similarity">
    <text evidence="4">Belongs to the UPF0026 family.</text>
</comment>
<sequence>MNTTFPAVYGPVNSWRYGRSLGIDPIGAISTCSFNCVYCQLGEIEHLSGDRQIFIPTADILRELAQFAPWEVDVITLSGSGEPTLAKNLGEILEGIKKLTGKLTLVLTNATLLNDAQVREELSLADKISVKLDGLWPDQLQRINRPIAGIELEQILTGIQTFQQEFTGELSVQTMVLQPWDQTTENRYLELLSLIKPTEVQLNRPTRPKPLQRELEGRGNHTGTPYGDRPVTQIKCVDGQTLQNLAKKISGAIGIPVRCAPVKVL</sequence>
<feature type="chain" id="PRO_0000217866" description="UPF0026 protein slr1464">
    <location>
        <begin position="1"/>
        <end position="265"/>
    </location>
</feature>
<feature type="domain" description="Radical SAM core" evidence="2">
    <location>
        <begin position="16"/>
        <end position="252"/>
    </location>
</feature>
<feature type="region of interest" description="Disordered" evidence="3">
    <location>
        <begin position="204"/>
        <end position="230"/>
    </location>
</feature>
<feature type="binding site" evidence="1">
    <location>
        <position position="32"/>
    </location>
    <ligand>
        <name>[4Fe-4S] cluster</name>
        <dbReference type="ChEBI" id="CHEBI:49883"/>
        <note>4Fe-4S-S-AdoMet</note>
    </ligand>
</feature>
<feature type="binding site" evidence="1">
    <location>
        <position position="36"/>
    </location>
    <ligand>
        <name>[4Fe-4S] cluster</name>
        <dbReference type="ChEBI" id="CHEBI:49883"/>
        <note>4Fe-4S-S-AdoMet</note>
    </ligand>
</feature>
<feature type="binding site" evidence="1">
    <location>
        <position position="39"/>
    </location>
    <ligand>
        <name>[4Fe-4S] cluster</name>
        <dbReference type="ChEBI" id="CHEBI:49883"/>
        <note>4Fe-4S-S-AdoMet</note>
    </ligand>
</feature>
<keyword id="KW-0004">4Fe-4S</keyword>
<keyword id="KW-0408">Iron</keyword>
<keyword id="KW-0411">Iron-sulfur</keyword>
<keyword id="KW-0479">Metal-binding</keyword>
<keyword id="KW-1185">Reference proteome</keyword>
<keyword id="KW-0949">S-adenosyl-L-methionine</keyword>
<dbReference type="EMBL" id="BA000022">
    <property type="protein sequence ID" value="BAA18664.1"/>
    <property type="molecule type" value="Genomic_DNA"/>
</dbReference>
<dbReference type="PIR" id="S76752">
    <property type="entry name" value="S76752"/>
</dbReference>
<dbReference type="SMR" id="P74557"/>
<dbReference type="IntAct" id="P74557">
    <property type="interactions" value="1"/>
</dbReference>
<dbReference type="STRING" id="1148.gene:10500430"/>
<dbReference type="PaxDb" id="1148-1653753"/>
<dbReference type="EnsemblBacteria" id="BAA18664">
    <property type="protein sequence ID" value="BAA18664"/>
    <property type="gene ID" value="BAA18664"/>
</dbReference>
<dbReference type="KEGG" id="syn:slr1464"/>
<dbReference type="eggNOG" id="COG0731">
    <property type="taxonomic scope" value="Bacteria"/>
</dbReference>
<dbReference type="InParanoid" id="P74557"/>
<dbReference type="PhylomeDB" id="P74557"/>
<dbReference type="Proteomes" id="UP000001425">
    <property type="component" value="Chromosome"/>
</dbReference>
<dbReference type="GO" id="GO:0051539">
    <property type="term" value="F:4 iron, 4 sulfur cluster binding"/>
    <property type="evidence" value="ECO:0007669"/>
    <property type="project" value="UniProtKB-KW"/>
</dbReference>
<dbReference type="GO" id="GO:0003824">
    <property type="term" value="F:catalytic activity"/>
    <property type="evidence" value="ECO:0007669"/>
    <property type="project" value="InterPro"/>
</dbReference>
<dbReference type="GO" id="GO:0046872">
    <property type="term" value="F:metal ion binding"/>
    <property type="evidence" value="ECO:0007669"/>
    <property type="project" value="UniProtKB-KW"/>
</dbReference>
<dbReference type="CDD" id="cd01335">
    <property type="entry name" value="Radical_SAM"/>
    <property type="match status" value="1"/>
</dbReference>
<dbReference type="Gene3D" id="3.20.20.70">
    <property type="entry name" value="Aldolase class I"/>
    <property type="match status" value="1"/>
</dbReference>
<dbReference type="InterPro" id="IPR013785">
    <property type="entry name" value="Aldolase_TIM"/>
</dbReference>
<dbReference type="InterPro" id="IPR040084">
    <property type="entry name" value="GTPase_Obg"/>
</dbReference>
<dbReference type="InterPro" id="IPR007197">
    <property type="entry name" value="rSAM"/>
</dbReference>
<dbReference type="PANTHER" id="PTHR43787">
    <property type="entry name" value="FEMO COFACTOR BIOSYNTHESIS PROTEIN NIFB-RELATED"/>
    <property type="match status" value="1"/>
</dbReference>
<dbReference type="PANTHER" id="PTHR43787:SF11">
    <property type="entry name" value="UPF0026 PROTEIN SLR1464"/>
    <property type="match status" value="1"/>
</dbReference>
<dbReference type="Pfam" id="PF13353">
    <property type="entry name" value="Fer4_12"/>
    <property type="match status" value="1"/>
</dbReference>
<dbReference type="Pfam" id="PF04055">
    <property type="entry name" value="Radical_SAM"/>
    <property type="match status" value="1"/>
</dbReference>
<dbReference type="SFLD" id="SFLDS00029">
    <property type="entry name" value="Radical_SAM"/>
    <property type="match status" value="1"/>
</dbReference>
<dbReference type="SFLD" id="SFLDG01083">
    <property type="entry name" value="Uncharacterised_Radical_SAM_Su"/>
    <property type="match status" value="1"/>
</dbReference>
<dbReference type="SUPFAM" id="SSF102114">
    <property type="entry name" value="Radical SAM enzymes"/>
    <property type="match status" value="1"/>
</dbReference>
<dbReference type="PROSITE" id="PS51918">
    <property type="entry name" value="RADICAL_SAM"/>
    <property type="match status" value="1"/>
</dbReference>
<reference key="1">
    <citation type="journal article" date="1996" name="DNA Res.">
        <title>Sequence analysis of the genome of the unicellular cyanobacterium Synechocystis sp. strain PCC6803. II. Sequence determination of the entire genome and assignment of potential protein-coding regions.</title>
        <authorList>
            <person name="Kaneko T."/>
            <person name="Sato S."/>
            <person name="Kotani H."/>
            <person name="Tanaka A."/>
            <person name="Asamizu E."/>
            <person name="Nakamura Y."/>
            <person name="Miyajima N."/>
            <person name="Hirosawa M."/>
            <person name="Sugiura M."/>
            <person name="Sasamoto S."/>
            <person name="Kimura T."/>
            <person name="Hosouchi T."/>
            <person name="Matsuno A."/>
            <person name="Muraki A."/>
            <person name="Nakazaki N."/>
            <person name="Naruo K."/>
            <person name="Okumura S."/>
            <person name="Shimpo S."/>
            <person name="Takeuchi C."/>
            <person name="Wada T."/>
            <person name="Watanabe A."/>
            <person name="Yamada M."/>
            <person name="Yasuda M."/>
            <person name="Tabata S."/>
        </authorList>
    </citation>
    <scope>NUCLEOTIDE SEQUENCE [LARGE SCALE GENOMIC DNA]</scope>
    <source>
        <strain>ATCC 27184 / PCC 6803 / Kazusa</strain>
    </source>
</reference>
<gene>
    <name type="ordered locus">slr1464</name>
</gene>